<organism>
    <name type="scientific">Mus musculus</name>
    <name type="common">Mouse</name>
    <dbReference type="NCBI Taxonomy" id="10090"/>
    <lineage>
        <taxon>Eukaryota</taxon>
        <taxon>Metazoa</taxon>
        <taxon>Chordata</taxon>
        <taxon>Craniata</taxon>
        <taxon>Vertebrata</taxon>
        <taxon>Euteleostomi</taxon>
        <taxon>Mammalia</taxon>
        <taxon>Eutheria</taxon>
        <taxon>Euarchontoglires</taxon>
        <taxon>Glires</taxon>
        <taxon>Rodentia</taxon>
        <taxon>Myomorpha</taxon>
        <taxon>Muroidea</taxon>
        <taxon>Muridae</taxon>
        <taxon>Murinae</taxon>
        <taxon>Mus</taxon>
        <taxon>Mus</taxon>
    </lineage>
</organism>
<protein>
    <recommendedName>
        <fullName>Secreted Ly-6/uPAR-related protein 1</fullName>
        <shortName>SLURP-1</shortName>
    </recommendedName>
    <alternativeName>
        <fullName>ARS component B</fullName>
    </alternativeName>
</protein>
<sequence>MTLRWAMWLLLLAAWSMGYGEAFRCYTCEQPTAINSCKNIAQCKMEDTACKTVLETVEAAFPFNHSPMVTRSCSSSCLATDPDGIGVAHPVFCCFRDLCNSGFPGFVAGL</sequence>
<comment type="function">
    <text evidence="2 4 7 9">Has an antitumor activity. Was found to be a marker of late differentiation of the skin. Implicated in maintaining the physiological and structural integrity of the keratinocyte layers of the skin. In vitro down-regulates keratinocyte proliferation; the function may involve the proposed role as modulator of nicotinic acetylcholine receptors (nAChRs) activity. In vitro inhibits alpha-7-dependent nAChR currents in an allosteric manner (By similarity). In T cells may be involved in regulation of intracellular Ca(2+) signaling (PubMed:17286989). Seems to have a immunomodulatory function in the cornea. The function may implicate a possible role as a scavenger receptor for PLAU thereby blocking PLAU-dependent functions of PLAUR such as in cell migration and proliferation (PubMed:23139280, PubMed:25168896).</text>
</comment>
<comment type="subunit">
    <text evidence="1 2 9">Homodimer (By similarity). Interacts with PLAU (PubMed:25168896). Interacts with CHRNA7.</text>
</comment>
<comment type="interaction">
    <interactant intactId="EBI-14060702">
        <id>Q9Z0K7</id>
    </interactant>
    <interactant intactId="EBI-8365661">
        <id>P06869</id>
        <label>Plau</label>
    </interactant>
    <organismsDiffer>false</organismsDiffer>
    <experiments>4</experiments>
</comment>
<comment type="subcellular location">
    <subcellularLocation>
        <location evidence="2">Secreted</location>
    </subcellularLocation>
</comment>
<comment type="tissue specificity">
    <text evidence="3 4 5 6 7">Expressed in skin, eye, whole lung, trachea, esophagus and stomach (PubMed:14721776). Widely expressed in various tissues including spleen and thymus but not pancreas. Expressed in macrophages, dendritic cells, T and B cells (PubMed:17286989). Expressed in lung specifically in ciliated bronchial epithelial cells (at protein level). Expression is decreased in lungs of asthmatic model mice (PubMed:19396877, PubMed:20621062). Expressed in the cornea (PubMed:23139280).</text>
</comment>
<comment type="induction">
    <text evidence="7">Down-regulated in the cornea under pro-inflammatory conditions.</text>
</comment>
<comment type="disruption phenotype">
    <text evidence="8">Severe palmoplantar keratoderma, reduced adiposity, protection from obesity on a high-fat diet, low plasma lipid levels, and neuromuscular abnormality (hind-limb clasping).</text>
</comment>
<keyword id="KW-0202">Cytokine</keyword>
<keyword id="KW-1015">Disulfide bond</keyword>
<keyword id="KW-1185">Reference proteome</keyword>
<keyword id="KW-0964">Secreted</keyword>
<keyword id="KW-0732">Signal</keyword>
<accession>Q9Z0K7</accession>
<accession>Q2TA55</accession>
<dbReference type="EMBL" id="AJ132356">
    <property type="protein sequence ID" value="CAA10646.1"/>
    <property type="molecule type" value="Genomic_DNA"/>
</dbReference>
<dbReference type="EMBL" id="AK003904">
    <property type="protein sequence ID" value="BAB23068.1"/>
    <property type="molecule type" value="mRNA"/>
</dbReference>
<dbReference type="EMBL" id="AK029079">
    <property type="protein sequence ID" value="BAC26282.1"/>
    <property type="molecule type" value="mRNA"/>
</dbReference>
<dbReference type="EMBL" id="BC111105">
    <property type="protein sequence ID" value="AAI11106.1"/>
    <property type="molecule type" value="mRNA"/>
</dbReference>
<dbReference type="EMBL" id="BC125244">
    <property type="protein sequence ID" value="AAI25245.1"/>
    <property type="molecule type" value="mRNA"/>
</dbReference>
<dbReference type="CCDS" id="CCDS27528.1"/>
<dbReference type="RefSeq" id="NP_065265.1">
    <property type="nucleotide sequence ID" value="NM_020519.2"/>
</dbReference>
<dbReference type="SMR" id="Q9Z0K7"/>
<dbReference type="FunCoup" id="Q9Z0K7">
    <property type="interactions" value="664"/>
</dbReference>
<dbReference type="IntAct" id="Q9Z0K7">
    <property type="interactions" value="1"/>
</dbReference>
<dbReference type="STRING" id="10090.ENSMUSP00000141013"/>
<dbReference type="iPTMnet" id="Q9Z0K7"/>
<dbReference type="PhosphoSitePlus" id="Q9Z0K7"/>
<dbReference type="PaxDb" id="10090-ENSMUSP00000141013"/>
<dbReference type="ProteomicsDB" id="261196"/>
<dbReference type="Antibodypedia" id="27784">
    <property type="antibodies" value="155 antibodies from 21 providers"/>
</dbReference>
<dbReference type="DNASU" id="57277"/>
<dbReference type="Ensembl" id="ENSMUST00000190433.2">
    <property type="protein sequence ID" value="ENSMUSP00000141013.2"/>
    <property type="gene ID" value="ENSMUSG00000022596.4"/>
</dbReference>
<dbReference type="GeneID" id="57277"/>
<dbReference type="KEGG" id="mmu:57277"/>
<dbReference type="UCSC" id="uc007wft.1">
    <property type="organism name" value="mouse"/>
</dbReference>
<dbReference type="AGR" id="MGI:1930923"/>
<dbReference type="CTD" id="57152"/>
<dbReference type="MGI" id="MGI:1930923">
    <property type="gene designation" value="Slurp1"/>
</dbReference>
<dbReference type="VEuPathDB" id="HostDB:ENSMUSG00000022596"/>
<dbReference type="eggNOG" id="ENOG502TDUY">
    <property type="taxonomic scope" value="Eukaryota"/>
</dbReference>
<dbReference type="GeneTree" id="ENSGT00940000162933"/>
<dbReference type="HOGENOM" id="CLU_141358_2_1_1"/>
<dbReference type="InParanoid" id="Q9Z0K7"/>
<dbReference type="OMA" id="PKSCCYT"/>
<dbReference type="OrthoDB" id="9900838at2759"/>
<dbReference type="PhylomeDB" id="Q9Z0K7"/>
<dbReference type="TreeFam" id="TF336080"/>
<dbReference type="BioGRID-ORCS" id="57277">
    <property type="hits" value="0 hits in 76 CRISPR screens"/>
</dbReference>
<dbReference type="PRO" id="PR:Q9Z0K7"/>
<dbReference type="Proteomes" id="UP000000589">
    <property type="component" value="Chromosome 15"/>
</dbReference>
<dbReference type="RNAct" id="Q9Z0K7">
    <property type="molecule type" value="protein"/>
</dbReference>
<dbReference type="Bgee" id="ENSMUSG00000022596">
    <property type="expression patterns" value="Expressed in tail skin and 34 other cell types or tissues"/>
</dbReference>
<dbReference type="ExpressionAtlas" id="Q9Z0K7">
    <property type="expression patterns" value="baseline and differential"/>
</dbReference>
<dbReference type="GO" id="GO:0005615">
    <property type="term" value="C:extracellular space"/>
    <property type="evidence" value="ECO:0007669"/>
    <property type="project" value="UniProtKB-KW"/>
</dbReference>
<dbReference type="GO" id="GO:0030549">
    <property type="term" value="F:acetylcholine receptor activator activity"/>
    <property type="evidence" value="ECO:0007669"/>
    <property type="project" value="Ensembl"/>
</dbReference>
<dbReference type="GO" id="GO:0005125">
    <property type="term" value="F:cytokine activity"/>
    <property type="evidence" value="ECO:0007669"/>
    <property type="project" value="UniProtKB-KW"/>
</dbReference>
<dbReference type="GO" id="GO:0007626">
    <property type="term" value="P:locomotory behavior"/>
    <property type="evidence" value="ECO:0000315"/>
    <property type="project" value="MGI"/>
</dbReference>
<dbReference type="GO" id="GO:0030336">
    <property type="term" value="P:negative regulation of cell migration"/>
    <property type="evidence" value="ECO:0000314"/>
    <property type="project" value="MGI"/>
</dbReference>
<dbReference type="GO" id="GO:0008285">
    <property type="term" value="P:negative regulation of cell population proliferation"/>
    <property type="evidence" value="ECO:0000314"/>
    <property type="project" value="MGI"/>
</dbReference>
<dbReference type="GO" id="GO:0010839">
    <property type="term" value="P:negative regulation of keratinocyte proliferation"/>
    <property type="evidence" value="ECO:0000315"/>
    <property type="project" value="MGI"/>
</dbReference>
<dbReference type="GO" id="GO:0050884">
    <property type="term" value="P:neuromuscular process controlling posture"/>
    <property type="evidence" value="ECO:0000315"/>
    <property type="project" value="MGI"/>
</dbReference>
<dbReference type="GO" id="GO:0038195">
    <property type="term" value="P:urokinase plasminogen activator signaling pathway"/>
    <property type="evidence" value="ECO:0007669"/>
    <property type="project" value="Ensembl"/>
</dbReference>
<dbReference type="CDD" id="cd23560">
    <property type="entry name" value="TFP_LU_ECD_SLURP1_like"/>
    <property type="match status" value="1"/>
</dbReference>
<dbReference type="FunFam" id="2.10.60.10:FF:000003">
    <property type="entry name" value="lymphocyte antigen 6E isoform X1"/>
    <property type="match status" value="1"/>
</dbReference>
<dbReference type="Gene3D" id="2.10.60.10">
    <property type="entry name" value="CD59"/>
    <property type="match status" value="1"/>
</dbReference>
<dbReference type="InterPro" id="IPR018363">
    <property type="entry name" value="CD59_antigen_CS"/>
</dbReference>
<dbReference type="InterPro" id="IPR051110">
    <property type="entry name" value="Ly-6/neurotoxin-like_GPI-ap"/>
</dbReference>
<dbReference type="InterPro" id="IPR045860">
    <property type="entry name" value="Snake_toxin-like_sf"/>
</dbReference>
<dbReference type="InterPro" id="IPR035076">
    <property type="entry name" value="Toxin/TOLIP"/>
</dbReference>
<dbReference type="PANTHER" id="PTHR16983">
    <property type="entry name" value="UPAR/LY6 DOMAIN-CONTAINING PROTEIN"/>
    <property type="match status" value="1"/>
</dbReference>
<dbReference type="PANTHER" id="PTHR16983:SF16">
    <property type="entry name" value="UPAR_LY6 DOMAIN-CONTAINING PROTEIN"/>
    <property type="match status" value="1"/>
</dbReference>
<dbReference type="Pfam" id="PF00087">
    <property type="entry name" value="Toxin_TOLIP"/>
    <property type="match status" value="1"/>
</dbReference>
<dbReference type="SUPFAM" id="SSF57302">
    <property type="entry name" value="Snake toxin-like"/>
    <property type="match status" value="1"/>
</dbReference>
<dbReference type="PROSITE" id="PS00983">
    <property type="entry name" value="LY6_UPAR"/>
    <property type="match status" value="1"/>
</dbReference>
<evidence type="ECO:0000250" key="1"/>
<evidence type="ECO:0000250" key="2">
    <source>
        <dbReference type="UniProtKB" id="P55000"/>
    </source>
</evidence>
<evidence type="ECO:0000269" key="3">
    <source>
    </source>
</evidence>
<evidence type="ECO:0000269" key="4">
    <source>
    </source>
</evidence>
<evidence type="ECO:0000269" key="5">
    <source>
    </source>
</evidence>
<evidence type="ECO:0000269" key="6">
    <source>
    </source>
</evidence>
<evidence type="ECO:0000269" key="7">
    <source>
    </source>
</evidence>
<evidence type="ECO:0000269" key="8">
    <source>
    </source>
</evidence>
<evidence type="ECO:0000269" key="9">
    <source>
    </source>
</evidence>
<proteinExistence type="evidence at protein level"/>
<name>SLUR1_MOUSE</name>
<gene>
    <name type="primary">Slurp1</name>
    <name type="synonym">Ars</name>
</gene>
<reference key="1">
    <citation type="submission" date="1999-01" db="EMBL/GenBank/DDBJ databases">
        <title>Cloning of ARS gene, component B, a new member of Ly-6-related family.</title>
        <authorList>
            <person name="Mastrangeli R."/>
            <person name="Donini S."/>
            <person name="Kelton C."/>
            <person name="Lou S."/>
            <person name="Serlupi-Crescenzi O."/>
            <person name="Vaccaro R."/>
            <person name="Renda T."/>
            <person name="Bressan A."/>
            <person name="Micangeli E."/>
            <person name="Milazzo F."/>
            <person name="Ciolli V."/>
            <person name="Biffoni M."/>
            <person name="El Tayar N."/>
            <person name="Lisciani R."/>
            <person name="Borrelli F."/>
            <person name="Martelli F."/>
            <person name="Serani S."/>
            <person name="Papoian R."/>
        </authorList>
    </citation>
    <scope>NUCLEOTIDE SEQUENCE [GENOMIC DNA]</scope>
    <source>
        <strain>BALB/cJ</strain>
    </source>
</reference>
<reference key="2">
    <citation type="journal article" date="2005" name="Science">
        <title>The transcriptional landscape of the mammalian genome.</title>
        <authorList>
            <person name="Carninci P."/>
            <person name="Kasukawa T."/>
            <person name="Katayama S."/>
            <person name="Gough J."/>
            <person name="Frith M.C."/>
            <person name="Maeda N."/>
            <person name="Oyama R."/>
            <person name="Ravasi T."/>
            <person name="Lenhard B."/>
            <person name="Wells C."/>
            <person name="Kodzius R."/>
            <person name="Shimokawa K."/>
            <person name="Bajic V.B."/>
            <person name="Brenner S.E."/>
            <person name="Batalov S."/>
            <person name="Forrest A.R."/>
            <person name="Zavolan M."/>
            <person name="Davis M.J."/>
            <person name="Wilming L.G."/>
            <person name="Aidinis V."/>
            <person name="Allen J.E."/>
            <person name="Ambesi-Impiombato A."/>
            <person name="Apweiler R."/>
            <person name="Aturaliya R.N."/>
            <person name="Bailey T.L."/>
            <person name="Bansal M."/>
            <person name="Baxter L."/>
            <person name="Beisel K.W."/>
            <person name="Bersano T."/>
            <person name="Bono H."/>
            <person name="Chalk A.M."/>
            <person name="Chiu K.P."/>
            <person name="Choudhary V."/>
            <person name="Christoffels A."/>
            <person name="Clutterbuck D.R."/>
            <person name="Crowe M.L."/>
            <person name="Dalla E."/>
            <person name="Dalrymple B.P."/>
            <person name="de Bono B."/>
            <person name="Della Gatta G."/>
            <person name="di Bernardo D."/>
            <person name="Down T."/>
            <person name="Engstrom P."/>
            <person name="Fagiolini M."/>
            <person name="Faulkner G."/>
            <person name="Fletcher C.F."/>
            <person name="Fukushima T."/>
            <person name="Furuno M."/>
            <person name="Futaki S."/>
            <person name="Gariboldi M."/>
            <person name="Georgii-Hemming P."/>
            <person name="Gingeras T.R."/>
            <person name="Gojobori T."/>
            <person name="Green R.E."/>
            <person name="Gustincich S."/>
            <person name="Harbers M."/>
            <person name="Hayashi Y."/>
            <person name="Hensch T.K."/>
            <person name="Hirokawa N."/>
            <person name="Hill D."/>
            <person name="Huminiecki L."/>
            <person name="Iacono M."/>
            <person name="Ikeo K."/>
            <person name="Iwama A."/>
            <person name="Ishikawa T."/>
            <person name="Jakt M."/>
            <person name="Kanapin A."/>
            <person name="Katoh M."/>
            <person name="Kawasawa Y."/>
            <person name="Kelso J."/>
            <person name="Kitamura H."/>
            <person name="Kitano H."/>
            <person name="Kollias G."/>
            <person name="Krishnan S.P."/>
            <person name="Kruger A."/>
            <person name="Kummerfeld S.K."/>
            <person name="Kurochkin I.V."/>
            <person name="Lareau L.F."/>
            <person name="Lazarevic D."/>
            <person name="Lipovich L."/>
            <person name="Liu J."/>
            <person name="Liuni S."/>
            <person name="McWilliam S."/>
            <person name="Madan Babu M."/>
            <person name="Madera M."/>
            <person name="Marchionni L."/>
            <person name="Matsuda H."/>
            <person name="Matsuzawa S."/>
            <person name="Miki H."/>
            <person name="Mignone F."/>
            <person name="Miyake S."/>
            <person name="Morris K."/>
            <person name="Mottagui-Tabar S."/>
            <person name="Mulder N."/>
            <person name="Nakano N."/>
            <person name="Nakauchi H."/>
            <person name="Ng P."/>
            <person name="Nilsson R."/>
            <person name="Nishiguchi S."/>
            <person name="Nishikawa S."/>
            <person name="Nori F."/>
            <person name="Ohara O."/>
            <person name="Okazaki Y."/>
            <person name="Orlando V."/>
            <person name="Pang K.C."/>
            <person name="Pavan W.J."/>
            <person name="Pavesi G."/>
            <person name="Pesole G."/>
            <person name="Petrovsky N."/>
            <person name="Piazza S."/>
            <person name="Reed J."/>
            <person name="Reid J.F."/>
            <person name="Ring B.Z."/>
            <person name="Ringwald M."/>
            <person name="Rost B."/>
            <person name="Ruan Y."/>
            <person name="Salzberg S.L."/>
            <person name="Sandelin A."/>
            <person name="Schneider C."/>
            <person name="Schoenbach C."/>
            <person name="Sekiguchi K."/>
            <person name="Semple C.A."/>
            <person name="Seno S."/>
            <person name="Sessa L."/>
            <person name="Sheng Y."/>
            <person name="Shibata Y."/>
            <person name="Shimada H."/>
            <person name="Shimada K."/>
            <person name="Silva D."/>
            <person name="Sinclair B."/>
            <person name="Sperling S."/>
            <person name="Stupka E."/>
            <person name="Sugiura K."/>
            <person name="Sultana R."/>
            <person name="Takenaka Y."/>
            <person name="Taki K."/>
            <person name="Tammoja K."/>
            <person name="Tan S.L."/>
            <person name="Tang S."/>
            <person name="Taylor M.S."/>
            <person name="Tegner J."/>
            <person name="Teichmann S.A."/>
            <person name="Ueda H.R."/>
            <person name="van Nimwegen E."/>
            <person name="Verardo R."/>
            <person name="Wei C.L."/>
            <person name="Yagi K."/>
            <person name="Yamanishi H."/>
            <person name="Zabarovsky E."/>
            <person name="Zhu S."/>
            <person name="Zimmer A."/>
            <person name="Hide W."/>
            <person name="Bult C."/>
            <person name="Grimmond S.M."/>
            <person name="Teasdale R.D."/>
            <person name="Liu E.T."/>
            <person name="Brusic V."/>
            <person name="Quackenbush J."/>
            <person name="Wahlestedt C."/>
            <person name="Mattick J.S."/>
            <person name="Hume D.A."/>
            <person name="Kai C."/>
            <person name="Sasaki D."/>
            <person name="Tomaru Y."/>
            <person name="Fukuda S."/>
            <person name="Kanamori-Katayama M."/>
            <person name="Suzuki M."/>
            <person name="Aoki J."/>
            <person name="Arakawa T."/>
            <person name="Iida J."/>
            <person name="Imamura K."/>
            <person name="Itoh M."/>
            <person name="Kato T."/>
            <person name="Kawaji H."/>
            <person name="Kawagashira N."/>
            <person name="Kawashima T."/>
            <person name="Kojima M."/>
            <person name="Kondo S."/>
            <person name="Konno H."/>
            <person name="Nakano K."/>
            <person name="Ninomiya N."/>
            <person name="Nishio T."/>
            <person name="Okada M."/>
            <person name="Plessy C."/>
            <person name="Shibata K."/>
            <person name="Shiraki T."/>
            <person name="Suzuki S."/>
            <person name="Tagami M."/>
            <person name="Waki K."/>
            <person name="Watahiki A."/>
            <person name="Okamura-Oho Y."/>
            <person name="Suzuki H."/>
            <person name="Kawai J."/>
            <person name="Hayashizaki Y."/>
        </authorList>
    </citation>
    <scope>NUCLEOTIDE SEQUENCE [LARGE SCALE MRNA]</scope>
    <source>
        <strain>C57BL/6J</strain>
        <tissue>Embryo</tissue>
        <tissue>Skin</tissue>
    </source>
</reference>
<reference key="3">
    <citation type="journal article" date="2004" name="Genome Res.">
        <title>The status, quality, and expansion of the NIH full-length cDNA project: the Mammalian Gene Collection (MGC).</title>
        <authorList>
            <consortium name="The MGC Project Team"/>
        </authorList>
    </citation>
    <scope>NUCLEOTIDE SEQUENCE [LARGE SCALE MRNA]</scope>
</reference>
<reference key="4">
    <citation type="journal article" date="2003" name="Eur. J. Dermatol.">
        <title>ARS component B: structural characterization, tissue expression and regulation of the gene and protein (SLURP-1) associated with Mal de Meleda.</title>
        <authorList>
            <person name="Mastrangeli R."/>
            <person name="Donini S."/>
            <person name="Kelton C.A."/>
            <person name="He C."/>
            <person name="Bressan A."/>
            <person name="Milazzo F."/>
            <person name="Ciolli V."/>
            <person name="Borrelli F."/>
            <person name="Martelli F."/>
            <person name="Biffoni M."/>
            <person name="Serlupi-Crescenzi O."/>
            <person name="Serani S."/>
            <person name="Micangeli E."/>
            <person name="El Tayar N."/>
            <person name="Vaccaro R."/>
            <person name="Renda T."/>
            <person name="Lisciani R."/>
            <person name="Rossi M."/>
            <person name="Papoian R."/>
        </authorList>
    </citation>
    <scope>TISSUE SPECIFICITY</scope>
</reference>
<reference key="5">
    <citation type="journal article" date="2007" name="Life Sci.">
        <title>Immune system expression of SLURP-1 and SLURP-2, two endogenous nicotinic acetylcholine receptor ligands.</title>
        <authorList>
            <person name="Moriwaki Y."/>
            <person name="Yoshikawa K."/>
            <person name="Fukuda H."/>
            <person name="Fujii Y.X."/>
            <person name="Misawa H."/>
            <person name="Kawashima K."/>
        </authorList>
    </citation>
    <scope>FUNCTION</scope>
    <scope>TISSUE SPECIFICITY</scope>
</reference>
<reference key="6">
    <citation type="journal article" date="2009" name="J. Neurosci. Res.">
        <title>Expression of SLURP-1, an endogenous alpha7 nicotinic acetylcholine receptor allosteric ligand, in murine bronchial epithelial cells.</title>
        <authorList>
            <person name="Horiguchi K."/>
            <person name="Horiguchi S."/>
            <person name="Yamashita N."/>
            <person name="Irie K."/>
            <person name="Masuda J."/>
            <person name="Takano-Ohmuro H."/>
            <person name="Himi T."/>
            <person name="Miyazawa M."/>
            <person name="Moriwaki Y."/>
            <person name="Okuda T."/>
            <person name="Misawa H."/>
            <person name="Ozaki H."/>
            <person name="Kawashima K."/>
        </authorList>
    </citation>
    <scope>TISSUE SPECIFICITY</scope>
</reference>
<reference key="7">
    <citation type="journal article" date="2010" name="Biochem. Biophys. Res. Commun.">
        <title>Down-regulation of secreted lymphocyte antigen-6/urokinase-type plasminogen activator receptor-related peptide-1 (SLURP-1), an endogenous allosteric alpha7 nicotinic acetylcholine receptor modulator, in murine and human asthmatic conditions.</title>
        <authorList>
            <person name="Narumoto O."/>
            <person name="Horiguchi K."/>
            <person name="Horiguchi S."/>
            <person name="Moriwaki Y."/>
            <person name="Takano-Ohmuro H."/>
            <person name="Shoji S."/>
            <person name="Misawa H."/>
            <person name="Yamashita N."/>
            <person name="Nagase T."/>
            <person name="Kawashima K."/>
            <person name="Yamashita N."/>
        </authorList>
    </citation>
    <scope>TISSUE SPECIFICITY</scope>
</reference>
<reference key="8">
    <citation type="journal article" date="2012" name="Invest. Ophthalmol. Vis. Sci.">
        <title>Klf4 regulates the expression of Slurp1, which functions as an immunomodulatory peptide in the mouse cornea.</title>
        <authorList>
            <person name="Swamynathan S."/>
            <person name="Buela K.A."/>
            <person name="Kinchington P."/>
            <person name="Lathrop K.L."/>
            <person name="Misawa H."/>
            <person name="Hendricks R.L."/>
            <person name="Swamynathan S.K."/>
        </authorList>
    </citation>
    <scope>FUNCTION</scope>
    <scope>TISSUE SPECIFICITY</scope>
    <scope>INDUCTION</scope>
</reference>
<reference key="9">
    <citation type="journal article" date="2014" name="J. Invest. Dermatol.">
        <title>Palmoplantar keratoderma along with neuromuscular and metabolic phenotypes in Slurp1-deficient mice.</title>
        <authorList>
            <person name="Adeyo O."/>
            <person name="Allan B.B."/>
            <person name="Barnes R.H. II"/>
            <person name="Goulbourne C.N."/>
            <person name="Tatar A."/>
            <person name="Tu Y."/>
            <person name="Young L.C."/>
            <person name="Weinstein M.M."/>
            <person name="Tontonoz P."/>
            <person name="Fong L.G."/>
            <person name="Beigneux A.P."/>
            <person name="Young S.G."/>
        </authorList>
    </citation>
    <scope>DISRUPTION PHENOTYPE</scope>
</reference>
<reference key="10">
    <citation type="journal article" date="2014" name="Invest. Ophthalmol. Vis. Sci.">
        <title>SLURP-1 modulates corneal homeostasis by serving as a soluble scavenger of urokinase-type plasminogen activator.</title>
        <authorList>
            <person name="Swamynathan S."/>
            <person name="Swamynathan S.K."/>
        </authorList>
    </citation>
    <scope>FUNCTION</scope>
    <scope>INTERACTION WITH PLAU</scope>
</reference>
<feature type="signal peptide" evidence="1">
    <location>
        <begin position="1"/>
        <end position="22"/>
    </location>
</feature>
<feature type="chain" id="PRO_0000036168" description="Secreted Ly-6/uPAR-related protein 1" evidence="1">
    <location>
        <begin position="23"/>
        <end position="110"/>
    </location>
</feature>
<feature type="domain" description="UPAR/Ly6">
    <location>
        <begin position="24"/>
        <end position="73"/>
    </location>
</feature>
<feature type="disulfide bond" evidence="2">
    <location>
        <begin position="25"/>
        <end position="50"/>
    </location>
</feature>
<feature type="disulfide bond" evidence="2">
    <location>
        <begin position="28"/>
        <end position="37"/>
    </location>
</feature>
<feature type="disulfide bond" evidence="2">
    <location>
        <begin position="43"/>
        <end position="73"/>
    </location>
</feature>
<feature type="disulfide bond" evidence="2">
    <location>
        <begin position="77"/>
        <end position="93"/>
    </location>
</feature>
<feature type="disulfide bond" evidence="2">
    <location>
        <begin position="94"/>
        <end position="99"/>
    </location>
</feature>